<feature type="chain" id="PRO_0000407701" description="Phosphate propanoyltransferase">
    <location>
        <begin position="1"/>
        <end position="210"/>
    </location>
</feature>
<feature type="binding site" evidence="1">
    <location>
        <begin position="26"/>
        <end position="28"/>
    </location>
    <ligand>
        <name>CoA</name>
        <dbReference type="ChEBI" id="CHEBI:57287"/>
    </ligand>
</feature>
<feature type="binding site" evidence="1">
    <location>
        <position position="30"/>
    </location>
    <ligand>
        <name>Zn(2+)</name>
        <dbReference type="ChEBI" id="CHEBI:29105"/>
        <label>1</label>
    </ligand>
</feature>
<feature type="binding site" evidence="1">
    <location>
        <position position="32"/>
    </location>
    <ligand>
        <name>Zn(2+)</name>
        <dbReference type="ChEBI" id="CHEBI:29105"/>
        <label>1</label>
    </ligand>
</feature>
<feature type="binding site" evidence="1">
    <location>
        <position position="71"/>
    </location>
    <ligand>
        <name>CoA</name>
        <dbReference type="ChEBI" id="CHEBI:57287"/>
    </ligand>
</feature>
<feature type="binding site" evidence="1">
    <location>
        <position position="78"/>
    </location>
    <ligand>
        <name>CoA</name>
        <dbReference type="ChEBI" id="CHEBI:57287"/>
    </ligand>
</feature>
<feature type="binding site" evidence="1">
    <location>
        <position position="84"/>
    </location>
    <ligand>
        <name>phosphate</name>
        <dbReference type="ChEBI" id="CHEBI:43474"/>
    </ligand>
</feature>
<feature type="binding site" evidence="1">
    <location>
        <position position="90"/>
    </location>
    <ligand>
        <name>Zn(2+)</name>
        <dbReference type="ChEBI" id="CHEBI:29105"/>
        <label>1</label>
    </ligand>
</feature>
<feature type="binding site" evidence="1">
    <location>
        <position position="138"/>
    </location>
    <ligand>
        <name>Zn(2+)</name>
        <dbReference type="ChEBI" id="CHEBI:29105"/>
        <label>2</label>
    </ligand>
</feature>
<feature type="binding site" evidence="1">
    <location>
        <position position="140"/>
    </location>
    <ligand>
        <name>Zn(2+)</name>
        <dbReference type="ChEBI" id="CHEBI:29105"/>
        <label>2</label>
    </ligand>
</feature>
<feature type="binding site" evidence="1">
    <location>
        <position position="186"/>
    </location>
    <ligand>
        <name>Zn(2+)</name>
        <dbReference type="ChEBI" id="CHEBI:29105"/>
        <label>2</label>
    </ligand>
</feature>
<feature type="binding site" evidence="1">
    <location>
        <position position="193"/>
    </location>
    <ligand>
        <name>CoA</name>
        <dbReference type="ChEBI" id="CHEBI:57287"/>
    </ligand>
</feature>
<proteinExistence type="inferred from homology"/>
<keyword id="KW-0012">Acyltransferase</keyword>
<keyword id="KW-1283">Bacterial microcompartment</keyword>
<keyword id="KW-0479">Metal-binding</keyword>
<keyword id="KW-1185">Reference proteome</keyword>
<keyword id="KW-0808">Transferase</keyword>
<keyword id="KW-0862">Zinc</keyword>
<name>PDUL_SALAR</name>
<dbReference type="EC" id="2.3.1.222"/>
<dbReference type="EMBL" id="CP000880">
    <property type="protein sequence ID" value="ABX20759.1"/>
    <property type="molecule type" value="Genomic_DNA"/>
</dbReference>
<dbReference type="SMR" id="A9MLP6"/>
<dbReference type="STRING" id="41514.SARI_00840"/>
<dbReference type="KEGG" id="ses:SARI_00840"/>
<dbReference type="HOGENOM" id="CLU_080676_1_0_6"/>
<dbReference type="UniPathway" id="UPA00621"/>
<dbReference type="Proteomes" id="UP000002084">
    <property type="component" value="Chromosome"/>
</dbReference>
<dbReference type="GO" id="GO:0031469">
    <property type="term" value="C:bacterial microcompartment"/>
    <property type="evidence" value="ECO:0007669"/>
    <property type="project" value="UniProtKB-SubCell"/>
</dbReference>
<dbReference type="GO" id="GO:0016747">
    <property type="term" value="F:acyltransferase activity, transferring groups other than amino-acyl groups"/>
    <property type="evidence" value="ECO:0007669"/>
    <property type="project" value="InterPro"/>
</dbReference>
<dbReference type="GO" id="GO:0046872">
    <property type="term" value="F:metal ion binding"/>
    <property type="evidence" value="ECO:0007669"/>
    <property type="project" value="UniProtKB-KW"/>
</dbReference>
<dbReference type="GO" id="GO:0051144">
    <property type="term" value="P:propanediol catabolic process"/>
    <property type="evidence" value="ECO:0007669"/>
    <property type="project" value="UniProtKB-UniPathway"/>
</dbReference>
<dbReference type="InterPro" id="IPR008300">
    <property type="entry name" value="PTAC"/>
</dbReference>
<dbReference type="NCBIfam" id="NF011652">
    <property type="entry name" value="PRK15070.1"/>
    <property type="match status" value="1"/>
</dbReference>
<dbReference type="PANTHER" id="PTHR39453">
    <property type="entry name" value="PHOSPHATE PROPANOYLTRANSFERASE"/>
    <property type="match status" value="1"/>
</dbReference>
<dbReference type="PANTHER" id="PTHR39453:SF1">
    <property type="entry name" value="PHOSPHATE PROPANOYLTRANSFERASE"/>
    <property type="match status" value="1"/>
</dbReference>
<dbReference type="Pfam" id="PF06130">
    <property type="entry name" value="PTAC"/>
    <property type="match status" value="1"/>
</dbReference>
<dbReference type="PIRSF" id="PIRSF010130">
    <property type="entry name" value="PduL"/>
    <property type="match status" value="1"/>
</dbReference>
<protein>
    <recommendedName>
        <fullName>Phosphate propanoyltransferase</fullName>
        <ecNumber>2.3.1.222</ecNumber>
    </recommendedName>
    <alternativeName>
        <fullName>Phosphate acyltransferase PduL</fullName>
    </alternativeName>
    <alternativeName>
        <fullName>Phosphotransacylase PduL</fullName>
        <shortName>PTAC</shortName>
    </alternativeName>
    <alternativeName>
        <fullName>Propanediol utilization protein PduL</fullName>
    </alternativeName>
</protein>
<gene>
    <name type="primary">pduL</name>
    <name type="ordered locus">SARI_00840</name>
</gene>
<accession>A9MLP6</accession>
<sequence>MDKTLLESTVHKVLDELRNRPIPLGVSNRHIHLCAADYARLFPEQAIREKKALLQPGQYAAEQTITLAGPKSQLKKVRLLGPLRNVSQVEISRTDARTLGIAAPLRMSGDLQGTPGIRLISPFAELELASGVIVAQRHIHMSPLDALIFRVAHGDTVSVAIEGSERRLIFDNVAIRVSPDMRLEMHIDTDEANAAGADDPHTFASLVARR</sequence>
<comment type="function">
    <text evidence="2">Involved in 1,2-propanediol (1,2-PD) utilization within the bacterial microcompartment (BMC) dedicated to 1,2-PD degradation by catalyzing the conversion of propanoyl-CoA to propanoyl-phosphate.</text>
</comment>
<comment type="catalytic activity">
    <reaction evidence="2">
        <text>propanoyl-CoA + phosphate = propanoyl phosphate + CoA</text>
        <dbReference type="Rhea" id="RHEA:28046"/>
        <dbReference type="ChEBI" id="CHEBI:43474"/>
        <dbReference type="ChEBI" id="CHEBI:57287"/>
        <dbReference type="ChEBI" id="CHEBI:57392"/>
        <dbReference type="ChEBI" id="CHEBI:58933"/>
        <dbReference type="EC" id="2.3.1.222"/>
    </reaction>
</comment>
<comment type="cofactor">
    <cofactor evidence="1">
        <name>Zn(2+)</name>
        <dbReference type="ChEBI" id="CHEBI:29105"/>
    </cofactor>
    <text evidence="1">There are 2 Zn(2+) ions per monomer; Zn(2+) and CoA bind inbetween the 2 domains in each monomer.</text>
</comment>
<comment type="pathway">
    <text>Polyol metabolism; 1,2-propanediol degradation.</text>
</comment>
<comment type="subcellular location">
    <subcellularLocation>
        <location evidence="2">Bacterial microcompartment</location>
    </subcellularLocation>
</comment>
<comment type="domain">
    <text evidence="1">Formed by 2 beta-barrels, each is capped on both ends by short alpha-helices.</text>
</comment>
<comment type="similarity">
    <text evidence="3">Belongs to the PduL family.</text>
</comment>
<reference key="1">
    <citation type="submission" date="2007-11" db="EMBL/GenBank/DDBJ databases">
        <authorList>
            <consortium name="The Salmonella enterica serovar Arizonae Genome Sequencing Project"/>
            <person name="McClelland M."/>
            <person name="Sanderson E.K."/>
            <person name="Porwollik S."/>
            <person name="Spieth J."/>
            <person name="Clifton W.S."/>
            <person name="Fulton R."/>
            <person name="Chunyan W."/>
            <person name="Wollam A."/>
            <person name="Shah N."/>
            <person name="Pepin K."/>
            <person name="Bhonagiri V."/>
            <person name="Nash W."/>
            <person name="Johnson M."/>
            <person name="Thiruvilangam P."/>
            <person name="Wilson R."/>
        </authorList>
    </citation>
    <scope>NUCLEOTIDE SEQUENCE [LARGE SCALE GENOMIC DNA]</scope>
    <source>
        <strain>ATCC BAA-731 / CDC346-86 / RSK2980</strain>
    </source>
</reference>
<evidence type="ECO:0000250" key="1">
    <source>
        <dbReference type="UniProtKB" id="Q21A54"/>
    </source>
</evidence>
<evidence type="ECO:0000250" key="2">
    <source>
        <dbReference type="UniProtKB" id="Q9XDN5"/>
    </source>
</evidence>
<evidence type="ECO:0000305" key="3"/>
<organism>
    <name type="scientific">Salmonella arizonae (strain ATCC BAA-731 / CDC346-86 / RSK2980)</name>
    <dbReference type="NCBI Taxonomy" id="41514"/>
    <lineage>
        <taxon>Bacteria</taxon>
        <taxon>Pseudomonadati</taxon>
        <taxon>Pseudomonadota</taxon>
        <taxon>Gammaproteobacteria</taxon>
        <taxon>Enterobacterales</taxon>
        <taxon>Enterobacteriaceae</taxon>
        <taxon>Salmonella</taxon>
    </lineage>
</organism>